<comment type="function">
    <text evidence="4 6 7">Probable transcription factor that functions as a negative regulator of lateral branching, presumably through its expression in axillary buds (PubMed:12581309, PubMed:20547591). Involved in the fine tuning of shoot branching. May function as an integrator of multiple signaling pathways to regulate the development of axillary buds. Works partially downstream of strigolactones to inhibit bud outgrowth (PubMed:20547591). Binds to MADS57 to suppress the negative regulation of D14 by MADS57 and balance the expression of D14 for tillering (PubMed:23463009).</text>
</comment>
<comment type="subunit">
    <text evidence="7">Interacts with MADS57.</text>
</comment>
<comment type="subcellular location">
    <subcellularLocation>
        <location evidence="1">Nucleus</location>
    </subcellularLocation>
</comment>
<comment type="tissue specificity">
    <text evidence="5 6">Expressed in the axillary bud of the first formed leaf node (PubMed:17655651). Expressed in axillary buds, shoot apical meristem, young leaves, vascular tissues and the tips of crown roots (PubMed:20547591).</text>
</comment>
<comment type="disruption phenotype">
    <text evidence="4">Increased lateral branching.</text>
</comment>
<comment type="miscellaneous">
    <text evidence="4">Plants over-expressing TB1 exhibit markedly reduced lateral branching, but normal propagation of axillary buds.</text>
</comment>
<sequence>MLPFFDSPSPMDIPLYQQLQLTPPSPKPDHHHHHHSTFFYYHHHPPPSPSFPSFPSPAAATIASPSPAMHPFMDLELEPHGQQLAAAEEDGAGGQGVDAGVPFGVDGAAAAAAARKDRHSKISTAGGMRDRRMRLSLDVARKFFALQDMLGFDKASKTVQWLLNMSKAAIREIMSDDASSVCEEDGSSSLSVDGKQQQHSNPADRGGGAGDHKGAAHGHSDGKKPAKPRRAAANPKPPRRLANAHPVPDKESRAKARERARERTKEKNRMRWVTLASAISVEAATAAAAAGEDKSPTSPSNNLNHSSSTNLVSTELEDGSSSTRHNGVGVSGGRMQEISAASEASDVIMAFANGGAYGDSGSYYLQQQHQQDQWELGGVVYANSRHYC</sequence>
<protein>
    <recommendedName>
        <fullName evidence="9">Transcription factor TB1</fullName>
    </recommendedName>
    <alternativeName>
        <fullName evidence="8">Protein FINE CULM 1</fullName>
    </alternativeName>
    <alternativeName>
        <fullName evidence="8">Protein TEOSINTE BRANCHED 1 homolog</fullName>
        <shortName evidence="8">OsTB1</shortName>
    </alternativeName>
    <alternativeName>
        <fullName evidence="11">TCP transcription factor 8</fullName>
        <shortName evidence="11">OsTCP8</shortName>
    </alternativeName>
</protein>
<dbReference type="EMBL" id="AB088343">
    <property type="protein sequence ID" value="BAC54954.1"/>
    <property type="molecule type" value="Genomic_DNA"/>
</dbReference>
<dbReference type="EMBL" id="AY043215">
    <property type="protein sequence ID" value="AAL05595.1"/>
    <property type="molecule type" value="mRNA"/>
</dbReference>
<dbReference type="EMBL" id="JQ315157">
    <property type="protein sequence ID" value="AFK65660.1"/>
    <property type="molecule type" value="mRNA"/>
</dbReference>
<dbReference type="EMBL" id="AC091775">
    <property type="protein sequence ID" value="AAM97162.1"/>
    <property type="molecule type" value="Genomic_DNA"/>
</dbReference>
<dbReference type="EMBL" id="DP000009">
    <property type="protein sequence ID" value="ABF98462.1"/>
    <property type="molecule type" value="Genomic_DNA"/>
</dbReference>
<dbReference type="EMBL" id="AP008209">
    <property type="protein sequence ID" value="BAF12942.1"/>
    <property type="molecule type" value="Genomic_DNA"/>
</dbReference>
<dbReference type="EMBL" id="AP014959">
    <property type="protein sequence ID" value="BAS85980.1"/>
    <property type="molecule type" value="Genomic_DNA"/>
</dbReference>
<dbReference type="EMBL" id="AK107083">
    <property type="protein sequence ID" value="BAG97939.1"/>
    <property type="molecule type" value="mRNA"/>
</dbReference>
<dbReference type="EMBL" id="AF322143">
    <property type="protein sequence ID" value="AAK37505.1"/>
    <property type="molecule type" value="Genomic_DNA"/>
</dbReference>
<dbReference type="SMR" id="Q8LN68"/>
<dbReference type="FunCoup" id="Q8LN68">
    <property type="interactions" value="177"/>
</dbReference>
<dbReference type="STRING" id="39947.Q8LN68"/>
<dbReference type="PaxDb" id="39947-Q8LN68"/>
<dbReference type="EnsemblPlants" id="Os03t0706500-01">
    <property type="protein sequence ID" value="Os03t0706500-01"/>
    <property type="gene ID" value="Os03g0706500"/>
</dbReference>
<dbReference type="GeneID" id="4333856"/>
<dbReference type="Gramene" id="Os03t0706500-01">
    <property type="protein sequence ID" value="Os03t0706500-01"/>
    <property type="gene ID" value="Os03g0706500"/>
</dbReference>
<dbReference type="KEGG" id="dosa:Os03g0706500"/>
<dbReference type="KEGG" id="osa:4333856"/>
<dbReference type="eggNOG" id="ENOG502QUQ6">
    <property type="taxonomic scope" value="Eukaryota"/>
</dbReference>
<dbReference type="HOGENOM" id="CLU_058710_0_0_1"/>
<dbReference type="InParanoid" id="Q8LN68"/>
<dbReference type="OMA" id="DQWELGG"/>
<dbReference type="OrthoDB" id="1896834at2759"/>
<dbReference type="PlantReactome" id="R-OSA-5654828">
    <property type="pathway name" value="Strigolactone signaling"/>
</dbReference>
<dbReference type="PlantReactome" id="R-OSA-9030908">
    <property type="pathway name" value="Underwater shoot and internode elongation"/>
</dbReference>
<dbReference type="PlantReactome" id="R-OSA-9608575">
    <property type="pathway name" value="Reproductive meristem phase change"/>
</dbReference>
<dbReference type="Proteomes" id="UP000000763">
    <property type="component" value="Chromosome 3"/>
</dbReference>
<dbReference type="Proteomes" id="UP000059680">
    <property type="component" value="Chromosome 3"/>
</dbReference>
<dbReference type="GO" id="GO:0005634">
    <property type="term" value="C:nucleus"/>
    <property type="evidence" value="ECO:0000318"/>
    <property type="project" value="GO_Central"/>
</dbReference>
<dbReference type="GO" id="GO:0003700">
    <property type="term" value="F:DNA-binding transcription factor activity"/>
    <property type="evidence" value="ECO:0000318"/>
    <property type="project" value="GO_Central"/>
</dbReference>
<dbReference type="GO" id="GO:0043565">
    <property type="term" value="F:sequence-specific DNA binding"/>
    <property type="evidence" value="ECO:0000318"/>
    <property type="project" value="GO_Central"/>
</dbReference>
<dbReference type="GO" id="GO:2000032">
    <property type="term" value="P:regulation of secondary shoot formation"/>
    <property type="evidence" value="ECO:0000318"/>
    <property type="project" value="GO_Central"/>
</dbReference>
<dbReference type="GO" id="GO:0048831">
    <property type="term" value="P:regulation of shoot system development"/>
    <property type="evidence" value="ECO:0000315"/>
    <property type="project" value="Gramene"/>
</dbReference>
<dbReference type="InterPro" id="IPR017888">
    <property type="entry name" value="CYC/TB1_R_domain"/>
</dbReference>
<dbReference type="InterPro" id="IPR017887">
    <property type="entry name" value="TF_TCP_subgr"/>
</dbReference>
<dbReference type="InterPro" id="IPR005333">
    <property type="entry name" value="Transcription_factor_TCP"/>
</dbReference>
<dbReference type="PANTHER" id="PTHR31072:SF226">
    <property type="entry name" value="TRANSCRIPTION FACTOR TCP18"/>
    <property type="match status" value="1"/>
</dbReference>
<dbReference type="PANTHER" id="PTHR31072">
    <property type="entry name" value="TRANSCRIPTION FACTOR TCP4-RELATED"/>
    <property type="match status" value="1"/>
</dbReference>
<dbReference type="Pfam" id="PF03634">
    <property type="entry name" value="TCP"/>
    <property type="match status" value="1"/>
</dbReference>
<dbReference type="PROSITE" id="PS51370">
    <property type="entry name" value="R"/>
    <property type="match status" value="1"/>
</dbReference>
<dbReference type="PROSITE" id="PS51369">
    <property type="entry name" value="TCP"/>
    <property type="match status" value="1"/>
</dbReference>
<organism>
    <name type="scientific">Oryza sativa subsp. japonica</name>
    <name type="common">Rice</name>
    <dbReference type="NCBI Taxonomy" id="39947"/>
    <lineage>
        <taxon>Eukaryota</taxon>
        <taxon>Viridiplantae</taxon>
        <taxon>Streptophyta</taxon>
        <taxon>Embryophyta</taxon>
        <taxon>Tracheophyta</taxon>
        <taxon>Spermatophyta</taxon>
        <taxon>Magnoliopsida</taxon>
        <taxon>Liliopsida</taxon>
        <taxon>Poales</taxon>
        <taxon>Poaceae</taxon>
        <taxon>BOP clade</taxon>
        <taxon>Oryzoideae</taxon>
        <taxon>Oryzeae</taxon>
        <taxon>Oryzinae</taxon>
        <taxon>Oryza</taxon>
        <taxon>Oryza sativa</taxon>
    </lineage>
</organism>
<evidence type="ECO:0000255" key="1">
    <source>
        <dbReference type="PROSITE-ProRule" id="PRU00701"/>
    </source>
</evidence>
<evidence type="ECO:0000255" key="2">
    <source>
        <dbReference type="PROSITE-ProRule" id="PRU00702"/>
    </source>
</evidence>
<evidence type="ECO:0000256" key="3">
    <source>
        <dbReference type="SAM" id="MobiDB-lite"/>
    </source>
</evidence>
<evidence type="ECO:0000269" key="4">
    <source>
    </source>
</evidence>
<evidence type="ECO:0000269" key="5">
    <source>
    </source>
</evidence>
<evidence type="ECO:0000269" key="6">
    <source>
    </source>
</evidence>
<evidence type="ECO:0000269" key="7">
    <source>
    </source>
</evidence>
<evidence type="ECO:0000303" key="8">
    <source>
    </source>
</evidence>
<evidence type="ECO:0000305" key="9"/>
<evidence type="ECO:0000312" key="10">
    <source>
        <dbReference type="EMBL" id="ABF98462.1"/>
    </source>
</evidence>
<evidence type="ECO:0000312" key="11">
    <source>
        <dbReference type="EMBL" id="AFK65660.1"/>
    </source>
</evidence>
<evidence type="ECO:0000312" key="12">
    <source>
        <dbReference type="EMBL" id="BAF12942.1"/>
    </source>
</evidence>
<keyword id="KW-0238">DNA-binding</keyword>
<keyword id="KW-0341">Growth regulation</keyword>
<keyword id="KW-0539">Nucleus</keyword>
<keyword id="KW-1185">Reference proteome</keyword>
<keyword id="KW-0804">Transcription</keyword>
<keyword id="KW-0805">Transcription regulation</keyword>
<gene>
    <name evidence="8" type="primary">TB1</name>
    <name evidence="8" type="synonym">FC1</name>
    <name evidence="11" type="synonym">TCP8</name>
    <name evidence="12" type="ordered locus">Os03g0706500</name>
    <name evidence="10" type="ordered locus">LOC_Os03g49880</name>
</gene>
<proteinExistence type="evidence at protein level"/>
<feature type="chain" id="PRO_0000441027" description="Transcription factor TB1">
    <location>
        <begin position="1"/>
        <end position="388"/>
    </location>
</feature>
<feature type="domain" description="TCP" evidence="1">
    <location>
        <begin position="115"/>
        <end position="173"/>
    </location>
</feature>
<feature type="domain" description="R" evidence="2">
    <location>
        <begin position="250"/>
        <end position="267"/>
    </location>
</feature>
<feature type="region of interest" description="Disordered" evidence="3">
    <location>
        <begin position="180"/>
        <end position="269"/>
    </location>
</feature>
<feature type="region of interest" description="Disordered" evidence="3">
    <location>
        <begin position="289"/>
        <end position="331"/>
    </location>
</feature>
<feature type="compositionally biased region" description="Polar residues" evidence="3">
    <location>
        <begin position="187"/>
        <end position="201"/>
    </location>
</feature>
<feature type="compositionally biased region" description="Basic and acidic residues" evidence="3">
    <location>
        <begin position="210"/>
        <end position="224"/>
    </location>
</feature>
<feature type="compositionally biased region" description="Basic and acidic residues" evidence="3">
    <location>
        <begin position="247"/>
        <end position="269"/>
    </location>
</feature>
<feature type="compositionally biased region" description="Low complexity" evidence="3">
    <location>
        <begin position="289"/>
        <end position="314"/>
    </location>
</feature>
<feature type="sequence conflict" description="In Ref. 2; AAL05595." evidence="9" ref="2">
    <original>P</original>
    <variation>S</variation>
    <location>
        <position position="47"/>
    </location>
</feature>
<reference key="1">
    <citation type="journal article" date="2003" name="Plant J.">
        <title>The OsTB1 gene negatively regulates lateral branching in rice.</title>
        <authorList>
            <person name="Takeda T."/>
            <person name="Suwa Y."/>
            <person name="Suzuki M."/>
            <person name="Kitano H."/>
            <person name="Ueguchi-Tanaka M."/>
            <person name="Ashikari M."/>
            <person name="Matsuoka M."/>
            <person name="Ueguchi C."/>
        </authorList>
    </citation>
    <scope>NUCLEOTIDE SEQUENCE [GENOMIC DNA]</scope>
    <scope>FUNCTION</scope>
    <source>
        <strain>cv. Nipponbare</strain>
    </source>
</reference>
<reference key="2">
    <citation type="submission" date="2001-06" db="EMBL/GenBank/DDBJ databases">
        <title>The structural and functional analysis of a Tb1-like gene in rice.</title>
        <authorList>
            <person name="Hu W."/>
            <person name="Zhao Y."/>
            <person name="Luo D."/>
        </authorList>
    </citation>
    <scope>NUCLEOTIDE SEQUENCE [MRNA]</scope>
</reference>
<reference key="3">
    <citation type="submission" date="2011-12" db="EMBL/GenBank/DDBJ databases">
        <title>TCP transcription factor.</title>
        <authorList>
            <person name="Yoon I.S."/>
            <person name="Kim D.Y."/>
        </authorList>
    </citation>
    <scope>NUCLEOTIDE SEQUENCE [MRNA]</scope>
    <source>
        <strain>cv. Dongjin</strain>
    </source>
</reference>
<reference key="4">
    <citation type="journal article" date="2005" name="Genome Res.">
        <title>Sequence, annotation, and analysis of synteny between rice chromosome 3 and diverged grass species.</title>
        <authorList>
            <consortium name="The rice chromosome 3 sequencing consortium"/>
            <person name="Buell C.R."/>
            <person name="Yuan Q."/>
            <person name="Ouyang S."/>
            <person name="Liu J."/>
            <person name="Zhu W."/>
            <person name="Wang A."/>
            <person name="Maiti R."/>
            <person name="Haas B."/>
            <person name="Wortman J."/>
            <person name="Pertea M."/>
            <person name="Jones K.M."/>
            <person name="Kim M."/>
            <person name="Overton L."/>
            <person name="Tsitrin T."/>
            <person name="Fadrosh D."/>
            <person name="Bera J."/>
            <person name="Weaver B."/>
            <person name="Jin S."/>
            <person name="Johri S."/>
            <person name="Reardon M."/>
            <person name="Webb K."/>
            <person name="Hill J."/>
            <person name="Moffat K."/>
            <person name="Tallon L."/>
            <person name="Van Aken S."/>
            <person name="Lewis M."/>
            <person name="Utterback T."/>
            <person name="Feldblyum T."/>
            <person name="Zismann V."/>
            <person name="Iobst S."/>
            <person name="Hsiao J."/>
            <person name="de Vazeille A.R."/>
            <person name="Salzberg S.L."/>
            <person name="White O."/>
            <person name="Fraser C.M."/>
            <person name="Yu Y."/>
            <person name="Kim H."/>
            <person name="Rambo T."/>
            <person name="Currie J."/>
            <person name="Collura K."/>
            <person name="Kernodle-Thompson S."/>
            <person name="Wei F."/>
            <person name="Kudrna K."/>
            <person name="Ammiraju J.S.S."/>
            <person name="Luo M."/>
            <person name="Goicoechea J.L."/>
            <person name="Wing R.A."/>
            <person name="Henry D."/>
            <person name="Oates R."/>
            <person name="Palmer M."/>
            <person name="Pries G."/>
            <person name="Saski C."/>
            <person name="Simmons J."/>
            <person name="Soderlund C."/>
            <person name="Nelson W."/>
            <person name="de la Bastide M."/>
            <person name="Spiegel L."/>
            <person name="Nascimento L."/>
            <person name="Huang E."/>
            <person name="Preston R."/>
            <person name="Zutavern T."/>
            <person name="Palmer L."/>
            <person name="O'Shaughnessy A."/>
            <person name="Dike S."/>
            <person name="McCombie W.R."/>
            <person name="Minx P."/>
            <person name="Cordum H."/>
            <person name="Wilson R."/>
            <person name="Jin W."/>
            <person name="Lee H.R."/>
            <person name="Jiang J."/>
            <person name="Jackson S."/>
        </authorList>
    </citation>
    <scope>NUCLEOTIDE SEQUENCE [LARGE SCALE GENOMIC DNA]</scope>
    <source>
        <strain>cv. Nipponbare</strain>
    </source>
</reference>
<reference key="5">
    <citation type="journal article" date="2005" name="Nature">
        <title>The map-based sequence of the rice genome.</title>
        <authorList>
            <consortium name="International rice genome sequencing project (IRGSP)"/>
        </authorList>
    </citation>
    <scope>NUCLEOTIDE SEQUENCE [LARGE SCALE GENOMIC DNA]</scope>
    <source>
        <strain>cv. Nipponbare</strain>
    </source>
</reference>
<reference key="6">
    <citation type="journal article" date="2008" name="Nucleic Acids Res.">
        <title>The rice annotation project database (RAP-DB): 2008 update.</title>
        <authorList>
            <consortium name="The rice annotation project (RAP)"/>
        </authorList>
    </citation>
    <scope>GENOME REANNOTATION</scope>
    <source>
        <strain>cv. Nipponbare</strain>
    </source>
</reference>
<reference key="7">
    <citation type="journal article" date="2013" name="Rice">
        <title>Improvement of the Oryza sativa Nipponbare reference genome using next generation sequence and optical map data.</title>
        <authorList>
            <person name="Kawahara Y."/>
            <person name="de la Bastide M."/>
            <person name="Hamilton J.P."/>
            <person name="Kanamori H."/>
            <person name="McCombie W.R."/>
            <person name="Ouyang S."/>
            <person name="Schwartz D.C."/>
            <person name="Tanaka T."/>
            <person name="Wu J."/>
            <person name="Zhou S."/>
            <person name="Childs K.L."/>
            <person name="Davidson R.M."/>
            <person name="Lin H."/>
            <person name="Quesada-Ocampo L."/>
            <person name="Vaillancourt B."/>
            <person name="Sakai H."/>
            <person name="Lee S.S."/>
            <person name="Kim J."/>
            <person name="Numa H."/>
            <person name="Itoh T."/>
            <person name="Buell C.R."/>
            <person name="Matsumoto T."/>
        </authorList>
    </citation>
    <scope>GENOME REANNOTATION</scope>
    <source>
        <strain>cv. Nipponbare</strain>
    </source>
</reference>
<reference key="8">
    <citation type="journal article" date="2003" name="Science">
        <title>Collection, mapping, and annotation of over 28,000 cDNA clones from japonica rice.</title>
        <authorList>
            <consortium name="The rice full-length cDNA consortium"/>
        </authorList>
    </citation>
    <scope>NUCLEOTIDE SEQUENCE [LARGE SCALE MRNA]</scope>
    <source>
        <strain>cv. Nipponbare</strain>
    </source>
</reference>
<reference key="9">
    <citation type="journal article" date="2001" name="Mol. Biol. Evol.">
        <title>Molecular evolution of the teosinte branched gene among maize and related grasses.</title>
        <authorList>
            <person name="Lukens L."/>
            <person name="Doebley J."/>
        </authorList>
    </citation>
    <scope>NUCLEOTIDE SEQUENCE [GENOMIC DNA] OF 1-355</scope>
</reference>
<reference key="10">
    <citation type="journal article" date="2007" name="Plant J.">
        <title>DWARF10, an RMS1/MAX4/DAD1 ortholog, controls lateral bud outgrowth in rice.</title>
        <authorList>
            <person name="Arite T."/>
            <person name="Iwata H."/>
            <person name="Ohshima K."/>
            <person name="Maekawa M."/>
            <person name="Nakajima M."/>
            <person name="Kojima M."/>
            <person name="Sakakibara H."/>
            <person name="Kyozuka J."/>
        </authorList>
    </citation>
    <scope>TISSUE SPECIFICITY</scope>
</reference>
<reference key="11">
    <citation type="journal article" date="2010" name="Plant Cell Physiol.">
        <title>FINE CULM1 (FC1) works downstream of strigolactones to inhibit the outgrowth of axillary buds in rice.</title>
        <authorList>
            <person name="Minakuchi K."/>
            <person name="Kameoka H."/>
            <person name="Yasuno N."/>
            <person name="Umehara M."/>
            <person name="Luo L."/>
            <person name="Kobayashi K."/>
            <person name="Hanada A."/>
            <person name="Ueno K."/>
            <person name="Asami T."/>
            <person name="Yamaguchi S."/>
            <person name="Kyozuka J."/>
        </authorList>
    </citation>
    <scope>FUNCTION</scope>
    <scope>TISSUE SPECIFICITY</scope>
    <scope>DISRUPTION PHENOTYPE</scope>
</reference>
<reference key="12">
    <citation type="journal article" date="2013" name="Nat. Commun.">
        <title>The interaction between OsMADS57 and OsTB1 modulates rice tillering via DWARF14.</title>
        <authorList>
            <person name="Guo S."/>
            <person name="Xu Y."/>
            <person name="Liu H."/>
            <person name="Mao Z."/>
            <person name="Zhang C."/>
            <person name="Ma Y."/>
            <person name="Zhang Q."/>
            <person name="Meng Z."/>
            <person name="Chong K."/>
        </authorList>
    </citation>
    <scope>FUNCTION</scope>
    <scope>INTERACTION WITH MADS57</scope>
</reference>
<accession>Q8LN68</accession>
<accession>Q941M8</accession>
<accession>Q9ATR4</accession>
<name>TB1_ORYSJ</name>